<proteinExistence type="evidence at transcript level"/>
<gene>
    <name type="primary">dnajc10</name>
</gene>
<reference key="1">
    <citation type="submission" date="2004-05" db="EMBL/GenBank/DDBJ databases">
        <authorList>
            <consortium name="NIH - Xenopus Gene Collection (XGC) project"/>
        </authorList>
    </citation>
    <scope>NUCLEOTIDE SEQUENCE [LARGE SCALE MRNA]</scope>
    <source>
        <tissue>Embryo</tissue>
    </source>
</reference>
<keyword id="KW-1015">Disulfide bond</keyword>
<keyword id="KW-0256">Endoplasmic reticulum</keyword>
<keyword id="KW-0325">Glycoprotein</keyword>
<keyword id="KW-0560">Oxidoreductase</keyword>
<keyword id="KW-0676">Redox-active center</keyword>
<keyword id="KW-1185">Reference proteome</keyword>
<keyword id="KW-0677">Repeat</keyword>
<keyword id="KW-0732">Signal</keyword>
<evidence type="ECO:0000250" key="1"/>
<evidence type="ECO:0000255" key="2"/>
<evidence type="ECO:0000255" key="3">
    <source>
        <dbReference type="PROSITE-ProRule" id="PRU00286"/>
    </source>
</evidence>
<evidence type="ECO:0000255" key="4">
    <source>
        <dbReference type="PROSITE-ProRule" id="PRU00691"/>
    </source>
</evidence>
<evidence type="ECO:0000255" key="5">
    <source>
        <dbReference type="PROSITE-ProRule" id="PRU10138"/>
    </source>
</evidence>
<dbReference type="EC" id="1.8.4.-"/>
<dbReference type="EMBL" id="BC070632">
    <property type="protein sequence ID" value="AAH70632.1"/>
    <property type="molecule type" value="mRNA"/>
</dbReference>
<dbReference type="RefSeq" id="NP_001084933.1">
    <property type="nucleotide sequence ID" value="NM_001091464.1"/>
</dbReference>
<dbReference type="SMR" id="Q6NRT6"/>
<dbReference type="GlyCosmos" id="Q6NRT6">
    <property type="glycosylation" value="2 sites, No reported glycans"/>
</dbReference>
<dbReference type="DNASU" id="431990"/>
<dbReference type="GeneID" id="431990"/>
<dbReference type="KEGG" id="xla:431990"/>
<dbReference type="AGR" id="Xenbase:XB-GENE-981000"/>
<dbReference type="CTD" id="431990"/>
<dbReference type="Xenbase" id="XB-GENE-981000">
    <property type="gene designation" value="dnajc10.S"/>
</dbReference>
<dbReference type="OrthoDB" id="5810603at2759"/>
<dbReference type="Proteomes" id="UP000186698">
    <property type="component" value="Chromosome 9_10S"/>
</dbReference>
<dbReference type="Bgee" id="431990">
    <property type="expression patterns" value="Expressed in egg cell and 19 other cell types or tissues"/>
</dbReference>
<dbReference type="GO" id="GO:0005788">
    <property type="term" value="C:endoplasmic reticulum lumen"/>
    <property type="evidence" value="ECO:0000250"/>
    <property type="project" value="UniProtKB"/>
</dbReference>
<dbReference type="GO" id="GO:0051787">
    <property type="term" value="F:misfolded protein binding"/>
    <property type="evidence" value="ECO:0000318"/>
    <property type="project" value="GO_Central"/>
</dbReference>
<dbReference type="GO" id="GO:0016671">
    <property type="term" value="F:oxidoreductase activity, acting on a sulfur group of donors, disulfide as acceptor"/>
    <property type="evidence" value="ECO:0000250"/>
    <property type="project" value="UniProtKB"/>
</dbReference>
<dbReference type="GO" id="GO:0015035">
    <property type="term" value="F:protein-disulfide reductase activity"/>
    <property type="evidence" value="ECO:0000250"/>
    <property type="project" value="UniProtKB"/>
</dbReference>
<dbReference type="GO" id="GO:0036503">
    <property type="term" value="P:ERAD pathway"/>
    <property type="evidence" value="ECO:0000250"/>
    <property type="project" value="UniProtKB"/>
</dbReference>
<dbReference type="GO" id="GO:0036498">
    <property type="term" value="P:IRE1-mediated unfolded protein response"/>
    <property type="evidence" value="ECO:0000318"/>
    <property type="project" value="GO_Central"/>
</dbReference>
<dbReference type="GO" id="GO:0034975">
    <property type="term" value="P:protein folding in endoplasmic reticulum"/>
    <property type="evidence" value="ECO:0000250"/>
    <property type="project" value="UniProtKB"/>
</dbReference>
<dbReference type="CDD" id="cd06257">
    <property type="entry name" value="DnaJ"/>
    <property type="match status" value="1"/>
</dbReference>
<dbReference type="CDD" id="cd03004">
    <property type="entry name" value="PDI_a_ERdj5_C"/>
    <property type="match status" value="3"/>
</dbReference>
<dbReference type="CDD" id="cd03003">
    <property type="entry name" value="PDI_a_ERdj5_N"/>
    <property type="match status" value="1"/>
</dbReference>
<dbReference type="FunFam" id="1.10.287.110:FF:000029">
    <property type="entry name" value="DnaJ homolog subfamily C member 10"/>
    <property type="match status" value="1"/>
</dbReference>
<dbReference type="FunFam" id="3.40.30.10:FF:000087">
    <property type="entry name" value="DnaJ homolog subfamily C member 10"/>
    <property type="match status" value="1"/>
</dbReference>
<dbReference type="FunFam" id="3.40.30.10:FF:000106">
    <property type="entry name" value="DnaJ homolog subfamily C member 10"/>
    <property type="match status" value="1"/>
</dbReference>
<dbReference type="FunFam" id="3.40.30.10:FF:000125">
    <property type="entry name" value="DnaJ homolog subfamily C member 10"/>
    <property type="match status" value="1"/>
</dbReference>
<dbReference type="FunFam" id="3.40.30.10:FF:000135">
    <property type="entry name" value="DnaJ homolog subfamily C member 10"/>
    <property type="match status" value="1"/>
</dbReference>
<dbReference type="FunFam" id="3.40.30.10:FF:000169">
    <property type="entry name" value="DnaJ homolog subfamily C member 10"/>
    <property type="match status" value="1"/>
</dbReference>
<dbReference type="Gene3D" id="1.10.287.110">
    <property type="entry name" value="DnaJ domain"/>
    <property type="match status" value="1"/>
</dbReference>
<dbReference type="Gene3D" id="3.40.30.10">
    <property type="entry name" value="Glutaredoxin"/>
    <property type="match status" value="6"/>
</dbReference>
<dbReference type="InterPro" id="IPR001623">
    <property type="entry name" value="DnaJ_domain"/>
</dbReference>
<dbReference type="InterPro" id="IPR052460">
    <property type="entry name" value="ER_disulfide_reductase"/>
</dbReference>
<dbReference type="InterPro" id="IPR021170">
    <property type="entry name" value="ERdj5"/>
</dbReference>
<dbReference type="InterPro" id="IPR035674">
    <property type="entry name" value="ERdj5_TRX_C"/>
</dbReference>
<dbReference type="InterPro" id="IPR035673">
    <property type="entry name" value="ERdj5_TRX_N"/>
</dbReference>
<dbReference type="InterPro" id="IPR036869">
    <property type="entry name" value="J_dom_sf"/>
</dbReference>
<dbReference type="InterPro" id="IPR036249">
    <property type="entry name" value="Thioredoxin-like_sf"/>
</dbReference>
<dbReference type="InterPro" id="IPR017937">
    <property type="entry name" value="Thioredoxin_CS"/>
</dbReference>
<dbReference type="InterPro" id="IPR013766">
    <property type="entry name" value="Thioredoxin_domain"/>
</dbReference>
<dbReference type="PANTHER" id="PTHR44340">
    <property type="entry name" value="DNAJ HOMOLOG SUBFAMILY C MEMBER 10"/>
    <property type="match status" value="1"/>
</dbReference>
<dbReference type="PANTHER" id="PTHR44340:SF1">
    <property type="entry name" value="DNAJ HOMOLOG SUBFAMILY C MEMBER 10"/>
    <property type="match status" value="1"/>
</dbReference>
<dbReference type="Pfam" id="PF00226">
    <property type="entry name" value="DnaJ"/>
    <property type="match status" value="1"/>
</dbReference>
<dbReference type="Pfam" id="PF00085">
    <property type="entry name" value="Thioredoxin"/>
    <property type="match status" value="4"/>
</dbReference>
<dbReference type="PIRSF" id="PIRSF037293">
    <property type="entry name" value="DnaJ_homolog_subfam-C"/>
    <property type="match status" value="1"/>
</dbReference>
<dbReference type="PRINTS" id="PR00625">
    <property type="entry name" value="JDOMAIN"/>
</dbReference>
<dbReference type="PRINTS" id="PR00421">
    <property type="entry name" value="THIOREDOXIN"/>
</dbReference>
<dbReference type="SMART" id="SM00271">
    <property type="entry name" value="DnaJ"/>
    <property type="match status" value="1"/>
</dbReference>
<dbReference type="SUPFAM" id="SSF46565">
    <property type="entry name" value="Chaperone J-domain"/>
    <property type="match status" value="1"/>
</dbReference>
<dbReference type="SUPFAM" id="SSF52833">
    <property type="entry name" value="Thioredoxin-like"/>
    <property type="match status" value="6"/>
</dbReference>
<dbReference type="PROSITE" id="PS50076">
    <property type="entry name" value="DNAJ_2"/>
    <property type="match status" value="1"/>
</dbReference>
<dbReference type="PROSITE" id="PS00014">
    <property type="entry name" value="ER_TARGET"/>
    <property type="match status" value="1"/>
</dbReference>
<dbReference type="PROSITE" id="PS00194">
    <property type="entry name" value="THIOREDOXIN_1"/>
    <property type="match status" value="3"/>
</dbReference>
<dbReference type="PROSITE" id="PS51352">
    <property type="entry name" value="THIOREDOXIN_2"/>
    <property type="match status" value="3"/>
</dbReference>
<organism>
    <name type="scientific">Xenopus laevis</name>
    <name type="common">African clawed frog</name>
    <dbReference type="NCBI Taxonomy" id="8355"/>
    <lineage>
        <taxon>Eukaryota</taxon>
        <taxon>Metazoa</taxon>
        <taxon>Chordata</taxon>
        <taxon>Craniata</taxon>
        <taxon>Vertebrata</taxon>
        <taxon>Euteleostomi</taxon>
        <taxon>Amphibia</taxon>
        <taxon>Batrachia</taxon>
        <taxon>Anura</taxon>
        <taxon>Pipoidea</taxon>
        <taxon>Pipidae</taxon>
        <taxon>Xenopodinae</taxon>
        <taxon>Xenopus</taxon>
        <taxon>Xenopus</taxon>
    </lineage>
</organism>
<comment type="function">
    <text evidence="1">Endoplasmic reticulum disulfide reductase involved both in the correct folding of proteins and degradation of misfolded proteins. Required for efficient folding of proteins in the endoplasmic reticulum by catalyzing the removal of non-native disulfide bonds formed during the folding of proteins. Also involved in endoplasmic reticulum-associated degradation (ERAD) by reducing incorrect disulfide bonds in misfolded glycoproteins (By similarity).</text>
</comment>
<comment type="subcellular location">
    <subcellularLocation>
        <location evidence="5">Endoplasmic reticulum lumen</location>
    </subcellularLocation>
</comment>
<comment type="domain">
    <text evidence="1">Thioredoxin domains 3 and 4 are the primary reductase domains.</text>
</comment>
<comment type="domain">
    <text evidence="1">The thioredoxin-like regions Trxb 1 and 2 lack a redox-active CXXC motif.</text>
</comment>
<protein>
    <recommendedName>
        <fullName>DnaJ homolog subfamily C member 10</fullName>
        <ecNumber>1.8.4.-</ecNumber>
    </recommendedName>
</protein>
<sequence length="796" mass="90984">MKHSLNTATSSSSVLKRTILYLVLISLAALVYCDDDYYDLLGVSKAATNREIRQAFKKLALKLHPDKNKDPDAHNKFLKINRAYEVLKDEDLRKKYDKYGEKGLDEQNQGGGYQSWSYYRYDFGIYDDDLEIITLDRGEFDGAVNSGELWFINFYSPGCSHCHDLAPTWRQFAKEMDGLLRIGAVNCGDNRMLCRSQGINSYPNLYIFKSGMNPVKYYGERSKERLVNFAMPYISSTVTELWAGNFRSSIEDAFSSGVGWLITFCSDTGDCLNSQTRSKLAGLLEGLVKVGWMDCATQGDLCDNLEITSSATVYFPPGSTLTDKENGDVLFLNSLDAREIYKEVLNHLPDLETISPESLQGKLSHHRWLLFFTFGTDEQSSLPEFKKLTVHLRSEHVQVGKFDCYSSPSICSELYIHKPCVAAFKGKGISAYEIHHGKVQLYDLVSFAKESVNSHVITLGPTNFPGKDRDTWLVDFFAPWCPPCRALLPELRIASKRLFGQIKFGTLDCTIHEGLCNMHNIRAYPTTVVFNHSNIHEYAGHNNAEEILEFIEDLRNPSVVTLTPETFQSLVRNRRGDEMWMVDFYAPWCGPCQALMPEWKRMARHINGLISVGSIDCQKYSLFCTQERVNGYPEIRLYPANINPQHTYYRYTGWHRDSQSLRNWALMYLPKASFDLTPESFHEHVINGKDNWVLDFYAPWCGPCQNFNPEFEILARAVKGKIKAGKVNCQAYEHLCNSASIRSYPTVRLYPYNGSKKKDYFGEQIDSRDAKEIAQIITKRIEAIKRVKEAYNKDEL</sequence>
<accession>Q6NRT6</accession>
<name>DJC10_XENLA</name>
<feature type="signal peptide" evidence="2">
    <location>
        <begin position="1"/>
        <end position="33"/>
    </location>
</feature>
<feature type="chain" id="PRO_0000281487" description="DnaJ homolog subfamily C member 10">
    <location>
        <begin position="34"/>
        <end position="796"/>
    </location>
</feature>
<feature type="domain" description="J" evidence="3">
    <location>
        <begin position="36"/>
        <end position="100"/>
    </location>
</feature>
<feature type="domain" description="Thioredoxin 1" evidence="4">
    <location>
        <begin position="131"/>
        <end position="233"/>
    </location>
</feature>
<feature type="domain" description="Thioredoxin 2" evidence="4">
    <location>
        <begin position="455"/>
        <end position="554"/>
    </location>
</feature>
<feature type="domain" description="Thioredoxin 3" evidence="4">
    <location>
        <begin position="558"/>
        <end position="668"/>
    </location>
</feature>
<feature type="domain" description="Thioredoxin 4" evidence="4">
    <location>
        <begin position="672"/>
        <end position="780"/>
    </location>
</feature>
<feature type="region of interest" description="Trxb 1">
    <location>
        <begin position="236"/>
        <end position="351"/>
    </location>
</feature>
<feature type="region of interest" description="Trxb 2">
    <location>
        <begin position="349"/>
        <end position="464"/>
    </location>
</feature>
<feature type="short sequence motif" description="Prevents secretion from ER" evidence="5">
    <location>
        <begin position="793"/>
        <end position="796"/>
    </location>
</feature>
<feature type="glycosylation site" description="N-linked (GlcNAc...) asparagine" evidence="2">
    <location>
        <position position="531"/>
    </location>
</feature>
<feature type="glycosylation site" description="N-linked (GlcNAc...) asparagine" evidence="2">
    <location>
        <position position="753"/>
    </location>
</feature>
<feature type="disulfide bond" description="Redox-active" evidence="4">
    <location>
        <begin position="159"/>
        <end position="162"/>
    </location>
</feature>
<feature type="disulfide bond" description="Redox-active" evidence="4">
    <location>
        <begin position="481"/>
        <end position="484"/>
    </location>
</feature>
<feature type="disulfide bond" description="Redox-active" evidence="4">
    <location>
        <begin position="589"/>
        <end position="592"/>
    </location>
</feature>
<feature type="disulfide bond" description="Redox-active" evidence="4">
    <location>
        <begin position="701"/>
        <end position="704"/>
    </location>
</feature>